<evidence type="ECO:0000250" key="1">
    <source>
        <dbReference type="UniProtKB" id="Q5BEJ5"/>
    </source>
</evidence>
<evidence type="ECO:0000255" key="2"/>
<evidence type="ECO:0000255" key="3">
    <source>
        <dbReference type="PROSITE-ProRule" id="PRU00498"/>
    </source>
</evidence>
<evidence type="ECO:0000255" key="4">
    <source>
        <dbReference type="PROSITE-ProRule" id="PRU00718"/>
    </source>
</evidence>
<evidence type="ECO:0000269" key="5">
    <source>
    </source>
</evidence>
<evidence type="ECO:0000303" key="6">
    <source>
    </source>
</evidence>
<evidence type="ECO:0000305" key="7"/>
<evidence type="ECO:0000305" key="8">
    <source>
    </source>
</evidence>
<name>AZAG_ASPNA</name>
<protein>
    <recommendedName>
        <fullName evidence="6">FAD-linked oxidoreductase azaG</fullName>
        <ecNumber evidence="8">1.-.-.-</ecNumber>
    </recommendedName>
    <alternativeName>
        <fullName evidence="6">Azaphilone biosynthesis cluster protein azaG</fullName>
    </alternativeName>
</protein>
<feature type="signal peptide" evidence="2">
    <location>
        <begin position="1"/>
        <end position="16"/>
    </location>
</feature>
<feature type="chain" id="PRO_5005680459" description="FAD-linked oxidoreductase azaG" evidence="2">
    <location>
        <begin position="17"/>
        <end position="468"/>
    </location>
</feature>
<feature type="domain" description="FAD-binding PCMH-type" evidence="4">
    <location>
        <begin position="54"/>
        <end position="228"/>
    </location>
</feature>
<feature type="glycosylation site" description="N-linked (GlcNAc...) asparagine" evidence="3">
    <location>
        <position position="44"/>
    </location>
</feature>
<feature type="glycosylation site" description="N-linked (GlcNAc...) asparagine" evidence="3">
    <location>
        <position position="272"/>
    </location>
</feature>
<feature type="glycosylation site" description="N-linked (GlcNAc...) asparagine" evidence="3">
    <location>
        <position position="348"/>
    </location>
</feature>
<feature type="glycosylation site" description="N-linked (GlcNAc...) asparagine" evidence="3">
    <location>
        <position position="464"/>
    </location>
</feature>
<sequence>MQLSGILSWLLSWLWASQTTLDLQGLYGPSLSPNAEIVLASDANYTHVTTQRWTVHGAPHYLGAIIPVTEHDIQHIIKISREHAINFLVVGAGHGATVTFERFRHGIAIDLQQFKDVHLDVDAERLTVAGATVFSDIIDPLYSAQREIVTPSAPCVGVVGMTLGGGIGSLQGLHGLLLDSLESVRLVTPIGDLIEVSETQYPELFWGLRGAGSNFGVVTSATYRTHQATHGGLVTNVDIFAATEHASIWQALSAFDDTLPPELALTLAVAYNRTIDQPLVLVNAIYYGPEEQALELLSPFTSLTPIMSRSVTVPWNALLDTTFFGLAAQEGGACAKNQAVNIYSIGLNHTDVPAWESYMEQLLQFYRQNPTYDGRFLVQRYPTQGALSTLDSNTAYPHRQIKMHINLEGWYTDPYLEDPVNAFLKQSRRHFQQSSGFDNLAVYVNYAHGDEGPDVWYTAEKLENLTRL</sequence>
<reference key="1">
    <citation type="journal article" date="2011" name="Genome Res.">
        <title>Comparative genomics of citric-acid-producing Aspergillus niger ATCC 1015 versus enzyme-producing CBS 513.88.</title>
        <authorList>
            <person name="Andersen M.R."/>
            <person name="Salazar M.P."/>
            <person name="Schaap P.J."/>
            <person name="van de Vondervoort P.J.I."/>
            <person name="Culley D."/>
            <person name="Thykaer J."/>
            <person name="Frisvad J.C."/>
            <person name="Nielsen K.F."/>
            <person name="Albang R."/>
            <person name="Albermann K."/>
            <person name="Berka R.M."/>
            <person name="Braus G.H."/>
            <person name="Braus-Stromeyer S.A."/>
            <person name="Corrochano L.M."/>
            <person name="Dai Z."/>
            <person name="van Dijck P.W.M."/>
            <person name="Hofmann G."/>
            <person name="Lasure L.L."/>
            <person name="Magnuson J.K."/>
            <person name="Menke H."/>
            <person name="Meijer M."/>
            <person name="Meijer S.L."/>
            <person name="Nielsen J.B."/>
            <person name="Nielsen M.L."/>
            <person name="van Ooyen A.J.J."/>
            <person name="Pel H.J."/>
            <person name="Poulsen L."/>
            <person name="Samson R.A."/>
            <person name="Stam H."/>
            <person name="Tsang A."/>
            <person name="van den Brink J.M."/>
            <person name="Atkins A."/>
            <person name="Aerts A."/>
            <person name="Shapiro H."/>
            <person name="Pangilinan J."/>
            <person name="Salamov A."/>
            <person name="Lou Y."/>
            <person name="Lindquist E."/>
            <person name="Lucas S."/>
            <person name="Grimwood J."/>
            <person name="Grigoriev I.V."/>
            <person name="Kubicek C.P."/>
            <person name="Martinez D."/>
            <person name="van Peij N.N.M.E."/>
            <person name="Roubos J.A."/>
            <person name="Nielsen J."/>
            <person name="Baker S.E."/>
        </authorList>
    </citation>
    <scope>NUCLEOTIDE SEQUENCE [LARGE SCALE GENOMIC DNA]</scope>
    <source>
        <strain>ATCC 1015 / CBS 113.46 / FGSC A1144 / LSHB Ac4 / NCTC 3858a / NRRL 328 / USDA 3528.7</strain>
    </source>
</reference>
<reference key="2">
    <citation type="journal article" date="2012" name="Chem. Biol.">
        <title>Characterization of a silent azaphilone gene cluster from Aspergillus niger ATCC 1015 reveals a hydroxylation-mediated pyran-ring formation.</title>
        <authorList>
            <person name="Zabala A.O."/>
            <person name="Xu W."/>
            <person name="Chooi Y.H."/>
            <person name="Tang Y."/>
        </authorList>
    </citation>
    <scope>FUNCTION</scope>
    <scope>INDUCTION</scope>
</reference>
<comment type="function">
    <text evidence="5">FAD-linked oxidoreductase; part of the gene cluster that mediates the biosynthesis of azaphilones, a class of fungal metabolites characterized by a highly oxygenated pyrano-quinone bicyclic core and exhibiting a broad range of bioactivities (PubMed:22921072). In the first step, the non-reducing polyketide synthase azaA forms the hexaketide precursor from successive condensations of five malonyl-CoA units, presumably with a simple acetyl-CoA starter unit (PubMed:22921072). The reactive polyketide chain then undergoes a PT-mediated C2-C7 cyclization to afford the aromatic ring and is eventually released as an aldehyde through the R-domain (PubMed:22921072). The putative ketoreductase azaE is proposed to catalyze the reduction of the terminal ketone resulting in the early culture product FK17-P2a (PubMed:22921072). The monooxygenase azaH was demonstrated to be the only enzyme required to convert FK17-P2a to azanigerone E (PubMed:22921072). AzaH first hydroxylates the benzaldehyde intermediate FK17-P2a at C4, which triggers the formation of the pyran-ring to afford azanigerone E (PubMed:22921072). In parallel, the 2,4-dimethylhexanoyl chain is synthesized by the HR-PKS azaB and is proposed to be transferred to the C4-hydroxyl of azanigerone E by the acyltransferase azaD directly from the ACP domain of azaB (PubMed:22921072). Alternatively, the 2,4-dimethyl-hexanoyl chain may be offloaded from the HR-PKS as a carboxylic acid and converted to an acyl-CoA by azaF (PubMed:22921072). The resulting acyl-CoA molecule could then be taken up as a substrate by AzaD to form azanigerone B (PubMed:22921072). To yield the carboxylic acid substituent in azanigerone A, the hydroxypropyl side chain of azanigerone B would need to undergo a C-C oxidative cleavage catalyzed by cytochrome P450 AzaI (PubMed:22921072). AzaI is proposed to act on a vicinal diol that leads to a C-C bond scission either through an alkoxyradical intermediate or a peroxy complex (PubMed:22921072). In the biosynthesis of azanigerone A, azanigerone B first undergoes hydroxylation at C10, possibly catalyzed by one of the two FAD-dependent monooxygenases encoded in the cluster, azaG or azaL, resulting in the vicinal diol azanigerone C (PubMed:22921072). Oxidative cleavage of azanigerone C by azaI would yield the corresponding aldehyde derivative of azanigerone A (PubMed:22921072). Finally, the dehydrogenase azaJ is proposed to convert the aldehyde functional group into the carboxylic acid, completing the conversion from azanigerone B to azanigerone A (PubMed:22921072). Alternatively, the oxidation of aldehyde to carboxylic acid may be catalyzed by the same P450 enzyme azaI via consecutive oxidation or by endogenous alcohol dehydrogenase (PubMed:22921072).</text>
</comment>
<comment type="cofactor">
    <cofactor evidence="1">
        <name>FAD</name>
        <dbReference type="ChEBI" id="CHEBI:57692"/>
    </cofactor>
</comment>
<comment type="pathway">
    <text evidence="5">Secondary metabolite biosynthesis.</text>
</comment>
<comment type="induction">
    <text evidence="5">Expression is under the control of the azaphilone cluster-specific transcription factor azaR (PubMed:22921072).</text>
</comment>
<comment type="similarity">
    <text evidence="7">Belongs to the oxygen-dependent FAD-linked oxidoreductase family.</text>
</comment>
<gene>
    <name evidence="6" type="primary">azaG</name>
    <name type="ORF">ASPNIDRAFT_189194</name>
</gene>
<keyword id="KW-0274">FAD</keyword>
<keyword id="KW-0285">Flavoprotein</keyword>
<keyword id="KW-0325">Glycoprotein</keyword>
<keyword id="KW-0560">Oxidoreductase</keyword>
<keyword id="KW-0732">Signal</keyword>
<accession>G3XMC1</accession>
<organism>
    <name type="scientific">Aspergillus niger (strain ATCC 1015 / CBS 113.46 / FGSC A1144 / LSHB Ac4 / NCTC 3858a / NRRL 328 / USDA 3528.7)</name>
    <dbReference type="NCBI Taxonomy" id="380704"/>
    <lineage>
        <taxon>Eukaryota</taxon>
        <taxon>Fungi</taxon>
        <taxon>Dikarya</taxon>
        <taxon>Ascomycota</taxon>
        <taxon>Pezizomycotina</taxon>
        <taxon>Eurotiomycetes</taxon>
        <taxon>Eurotiomycetidae</taxon>
        <taxon>Eurotiales</taxon>
        <taxon>Aspergillaceae</taxon>
        <taxon>Aspergillus</taxon>
        <taxon>Aspergillus subgen. Circumdati</taxon>
    </lineage>
</organism>
<dbReference type="EC" id="1.-.-.-" evidence="8"/>
<dbReference type="EMBL" id="ACJE01000001">
    <property type="protein sequence ID" value="EHA28234.1"/>
    <property type="molecule type" value="Genomic_DNA"/>
</dbReference>
<dbReference type="SMR" id="G3XMC1"/>
<dbReference type="STRING" id="380704.G3XMC1"/>
<dbReference type="GlyCosmos" id="G3XMC1">
    <property type="glycosylation" value="4 sites, No reported glycans"/>
</dbReference>
<dbReference type="HOGENOM" id="CLU_018354_0_0_1"/>
<dbReference type="OrthoDB" id="22847at5052"/>
<dbReference type="Proteomes" id="UP000009038">
    <property type="component" value="Unassembled WGS sequence"/>
</dbReference>
<dbReference type="GO" id="GO:0071949">
    <property type="term" value="F:FAD binding"/>
    <property type="evidence" value="ECO:0007669"/>
    <property type="project" value="InterPro"/>
</dbReference>
<dbReference type="GO" id="GO:0016491">
    <property type="term" value="F:oxidoreductase activity"/>
    <property type="evidence" value="ECO:0007669"/>
    <property type="project" value="UniProtKB-KW"/>
</dbReference>
<dbReference type="Gene3D" id="3.30.465.10">
    <property type="match status" value="1"/>
</dbReference>
<dbReference type="Gene3D" id="3.40.462.20">
    <property type="match status" value="1"/>
</dbReference>
<dbReference type="InterPro" id="IPR016166">
    <property type="entry name" value="FAD-bd_PCMH"/>
</dbReference>
<dbReference type="InterPro" id="IPR036318">
    <property type="entry name" value="FAD-bd_PCMH-like_sf"/>
</dbReference>
<dbReference type="InterPro" id="IPR016169">
    <property type="entry name" value="FAD-bd_PCMH_sub2"/>
</dbReference>
<dbReference type="InterPro" id="IPR050416">
    <property type="entry name" value="FAD-linked_Oxidoreductase"/>
</dbReference>
<dbReference type="InterPro" id="IPR006094">
    <property type="entry name" value="Oxid_FAD_bind_N"/>
</dbReference>
<dbReference type="PANTHER" id="PTHR42973">
    <property type="entry name" value="BINDING OXIDOREDUCTASE, PUTATIVE (AFU_ORTHOLOGUE AFUA_1G17690)-RELATED"/>
    <property type="match status" value="1"/>
</dbReference>
<dbReference type="PANTHER" id="PTHR42973:SF32">
    <property type="entry name" value="FAD-LINKED OXIDOREDUCTASE AFOF"/>
    <property type="match status" value="1"/>
</dbReference>
<dbReference type="Pfam" id="PF01565">
    <property type="entry name" value="FAD_binding_4"/>
    <property type="match status" value="1"/>
</dbReference>
<dbReference type="SUPFAM" id="SSF56176">
    <property type="entry name" value="FAD-binding/transporter-associated domain-like"/>
    <property type="match status" value="1"/>
</dbReference>
<dbReference type="PROSITE" id="PS51387">
    <property type="entry name" value="FAD_PCMH"/>
    <property type="match status" value="1"/>
</dbReference>
<proteinExistence type="evidence at transcript level"/>